<accession>P68610</accession>
<accession>P20984</accession>
<organism>
    <name type="scientific">Vaccinia virus (strain Copenhagen)</name>
    <name type="common">VACV</name>
    <dbReference type="NCBI Taxonomy" id="10249"/>
    <lineage>
        <taxon>Viruses</taxon>
        <taxon>Varidnaviria</taxon>
        <taxon>Bamfordvirae</taxon>
        <taxon>Nucleocytoviricota</taxon>
        <taxon>Pokkesviricetes</taxon>
        <taxon>Chitovirales</taxon>
        <taxon>Poxviridae</taxon>
        <taxon>Chordopoxvirinae</taxon>
        <taxon>Orthopoxvirus</taxon>
        <taxon>Vaccinia virus</taxon>
    </lineage>
</organism>
<feature type="chain" id="PRO_0000099146" description="DNA-directed RNA polymerase 19 kDa subunit">
    <location>
        <begin position="1"/>
        <end position="164"/>
    </location>
</feature>
<feature type="region of interest" description="Disordered" evidence="2">
    <location>
        <begin position="1"/>
        <end position="39"/>
    </location>
</feature>
<feature type="compositionally biased region" description="Acidic residues" evidence="2">
    <location>
        <begin position="1"/>
        <end position="35"/>
    </location>
</feature>
<keyword id="KW-0002">3D-structure</keyword>
<keyword id="KW-0240">DNA-directed RNA polymerase</keyword>
<keyword id="KW-0244">Early protein</keyword>
<keyword id="KW-0548">Nucleotidyltransferase</keyword>
<keyword id="KW-1185">Reference proteome</keyword>
<keyword id="KW-0804">Transcription</keyword>
<keyword id="KW-0808">Transferase</keyword>
<keyword id="KW-0946">Virion</keyword>
<reference key="1">
    <citation type="journal article" date="1990" name="Virology">
        <title>The complete DNA sequence of vaccinia virus.</title>
        <authorList>
            <person name="Goebel S.J."/>
            <person name="Johnson G.P."/>
            <person name="Perkus M.E."/>
            <person name="Davis S.W."/>
            <person name="Winslow J.P."/>
            <person name="Paoletti E."/>
        </authorList>
    </citation>
    <scope>NUCLEOTIDE SEQUENCE [LARGE SCALE GENOMIC DNA]</scope>
</reference>
<reference key="2">
    <citation type="journal article" date="1990" name="Virology">
        <title>Appendix to 'The complete DNA sequence of vaccinia virus'.</title>
        <authorList>
            <person name="Goebel S.J."/>
            <person name="Johnson G.P."/>
            <person name="Perkus M.E."/>
            <person name="Davis S.W."/>
            <person name="Winslow J.P."/>
            <person name="Paoletti E."/>
        </authorList>
    </citation>
    <scope>NUCLEOTIDE SEQUENCE [LARGE SCALE GENOMIC DNA]</scope>
</reference>
<reference key="3">
    <citation type="journal article" date="2003" name="J. Gen. Virol.">
        <title>Vaccinia virus transcription.</title>
        <authorList>
            <person name="Broyles S.S."/>
        </authorList>
    </citation>
    <scope>REVIEW</scope>
</reference>
<dbReference type="EC" id="2.7.7.6"/>
<dbReference type="EMBL" id="M35027">
    <property type="protein sequence ID" value="AAA48122.1"/>
    <property type="molecule type" value="Genomic_DNA"/>
</dbReference>
<dbReference type="PIR" id="B41806">
    <property type="entry name" value="RNVZ19"/>
</dbReference>
<dbReference type="PDB" id="8P0J">
    <property type="method" value="EM"/>
    <property type="resolution" value="2.39 A"/>
    <property type="chains" value="F=1-164"/>
</dbReference>
<dbReference type="PDB" id="8P0K">
    <property type="method" value="EM"/>
    <property type="resolution" value="2.64 A"/>
    <property type="chains" value="F=1-164"/>
</dbReference>
<dbReference type="PDB" id="8P0N">
    <property type="method" value="EM"/>
    <property type="resolution" value="2.58 A"/>
    <property type="chains" value="F=1-164"/>
</dbReference>
<dbReference type="PDB" id="8RQK">
    <property type="method" value="EM"/>
    <property type="resolution" value="2.65 A"/>
    <property type="chains" value="F=1-164"/>
</dbReference>
<dbReference type="PDBsum" id="8P0J"/>
<dbReference type="PDBsum" id="8P0K"/>
<dbReference type="PDBsum" id="8P0N"/>
<dbReference type="PDBsum" id="8RQK"/>
<dbReference type="EMDB" id="EMD-17334"/>
<dbReference type="EMDB" id="EMD-17335"/>
<dbReference type="EMDB" id="EMD-17336"/>
<dbReference type="EMDB" id="EMD-19442"/>
<dbReference type="SMR" id="P68610"/>
<dbReference type="Proteomes" id="UP000008269">
    <property type="component" value="Segment"/>
</dbReference>
<dbReference type="GO" id="GO:0000428">
    <property type="term" value="C:DNA-directed RNA polymerase complex"/>
    <property type="evidence" value="ECO:0007669"/>
    <property type="project" value="UniProtKB-KW"/>
</dbReference>
<dbReference type="GO" id="GO:0044423">
    <property type="term" value="C:virion component"/>
    <property type="evidence" value="ECO:0007669"/>
    <property type="project" value="UniProtKB-KW"/>
</dbReference>
<dbReference type="GO" id="GO:0003677">
    <property type="term" value="F:DNA binding"/>
    <property type="evidence" value="ECO:0007669"/>
    <property type="project" value="InterPro"/>
</dbReference>
<dbReference type="GO" id="GO:0003899">
    <property type="term" value="F:DNA-directed RNA polymerase activity"/>
    <property type="evidence" value="ECO:0007669"/>
    <property type="project" value="UniProtKB-EC"/>
</dbReference>
<dbReference type="GO" id="GO:0006351">
    <property type="term" value="P:DNA-templated transcription"/>
    <property type="evidence" value="ECO:0007669"/>
    <property type="project" value="InterPro"/>
</dbReference>
<dbReference type="Gene3D" id="3.90.940.10">
    <property type="match status" value="1"/>
</dbReference>
<dbReference type="InterPro" id="IPR007984">
    <property type="entry name" value="DNA-dir_RNA_Pol_19kDa_poxvir"/>
</dbReference>
<dbReference type="InterPro" id="IPR036161">
    <property type="entry name" value="RPB6/omega-like_sf"/>
</dbReference>
<dbReference type="Pfam" id="PF05320">
    <property type="entry name" value="Pox_RNA_Pol_19"/>
    <property type="match status" value="1"/>
</dbReference>
<dbReference type="PIRSF" id="PIRSF000743">
    <property type="entry name" value="RPO19"/>
    <property type="match status" value="1"/>
</dbReference>
<comment type="function">
    <text evidence="1">Part of the DNA-dependent RNA polymerase which catalyzes the transcription of viral DNA into RNA using the four ribonucleoside triphosphates as substrates. Responsible for the transcription of early, intermediate and late genes. DNA-dependent RNA polymerase associates with the early transcription factor (ETF), itself composed of OPG118 and OPG133, thereby allowing the early genes transcription. Late transcription, and probably also intermediate transcription, require newly synthesized RNA polymerase.</text>
</comment>
<comment type="catalytic activity">
    <reaction>
        <text>RNA(n) + a ribonucleoside 5'-triphosphate = RNA(n+1) + diphosphate</text>
        <dbReference type="Rhea" id="RHEA:21248"/>
        <dbReference type="Rhea" id="RHEA-COMP:14527"/>
        <dbReference type="Rhea" id="RHEA-COMP:17342"/>
        <dbReference type="ChEBI" id="CHEBI:33019"/>
        <dbReference type="ChEBI" id="CHEBI:61557"/>
        <dbReference type="ChEBI" id="CHEBI:140395"/>
        <dbReference type="EC" id="2.7.7.6"/>
    </reaction>
</comment>
<comment type="subunit">
    <text evidence="1">The DNA-dependent RNA polymerase used for intermediate and late genes expression consists of eight subunits Rpo30/OPG66, Rpo7/OPG90, Rpo22/OPG103, Rpo147/OPG105, Rpo18/OPG119, Rpo19/OPG131, Rpo132/OPG151 and Rpo35/OPG156. The same holoenzyme, with the addition of the transcription-specificity factor OPG109, is used for early gene expression.</text>
</comment>
<comment type="subcellular location">
    <subcellularLocation>
        <location evidence="1">Virion</location>
    </subcellularLocation>
    <text evidence="1">All the enzymes and other proteins required to synthesize early mRNAs are packaged within the virion core along with the DNA genome. This is necessary because viral early mRNAs are synthesized within minutes after virus entry into the cell and are extruded through pores in the core particle.</text>
</comment>
<comment type="induction">
    <text>Expressed in the early phase of the viral replicative cycle. Expression seems to continue throughout virus infection.</text>
</comment>
<comment type="similarity">
    <text evidence="3">Belongs to the poxviridae DNA-directed RNA polymerase 19 kDa subunit family.</text>
</comment>
<evidence type="ECO:0000250" key="1">
    <source>
        <dbReference type="UniProtKB" id="Q76ZQ8"/>
    </source>
</evidence>
<evidence type="ECO:0000256" key="2">
    <source>
        <dbReference type="SAM" id="MobiDB-lite"/>
    </source>
</evidence>
<evidence type="ECO:0000305" key="3"/>
<proteinExistence type="evidence at protein level"/>
<sequence>MADTDDIIDYESDDLTEYEDDEEEEEDGESLETSDIDPKSSYKIVESASTHIEDAHSNLKHIGNHISALKRRYTRRISLFEIAGIIAESYNLLQRGRLPLVSEFSDETMKQNMLHVIIQEIEEGSCPIVIEKNGELLSVNDFDKDGLKFHLDYIIKIWKLQKRY</sequence>
<name>RP19_VACCC</name>
<protein>
    <recommendedName>
        <fullName>DNA-directed RNA polymerase 19 kDa subunit</fullName>
        <ecNumber>2.7.7.6</ecNumber>
    </recommendedName>
</protein>
<gene>
    <name type="primary">OPG131</name>
    <name type="synonym">RPO19</name>
    <name type="ORF">A5R</name>
</gene>
<organismHost>
    <name type="scientific">Homo sapiens</name>
    <name type="common">Human</name>
    <dbReference type="NCBI Taxonomy" id="9606"/>
</organismHost>